<proteinExistence type="inferred from homology"/>
<dbReference type="EMBL" id="CR382125">
    <property type="protein sequence ID" value="CAG99111.1"/>
    <property type="molecule type" value="Genomic_DNA"/>
</dbReference>
<dbReference type="RefSeq" id="XP_454024.1">
    <property type="nucleotide sequence ID" value="XM_454024.1"/>
</dbReference>
<dbReference type="SMR" id="Q6CPW5"/>
<dbReference type="FunCoup" id="Q6CPW5">
    <property type="interactions" value="130"/>
</dbReference>
<dbReference type="STRING" id="284590.Q6CPW5"/>
<dbReference type="GlyCosmos" id="Q6CPW5">
    <property type="glycosylation" value="3 sites, No reported glycans"/>
</dbReference>
<dbReference type="PaxDb" id="284590-Q6CPW5"/>
<dbReference type="KEGG" id="kla:KLLA0_E01695g"/>
<dbReference type="eggNOG" id="ENOG502QR0E">
    <property type="taxonomic scope" value="Eukaryota"/>
</dbReference>
<dbReference type="HOGENOM" id="CLU_024345_0_0_1"/>
<dbReference type="InParanoid" id="Q6CPW5"/>
<dbReference type="OMA" id="FQYTIIA"/>
<dbReference type="Proteomes" id="UP000000598">
    <property type="component" value="Chromosome E"/>
</dbReference>
<dbReference type="GO" id="GO:0005778">
    <property type="term" value="C:peroxisomal membrane"/>
    <property type="evidence" value="ECO:0007669"/>
    <property type="project" value="UniProtKB-SubCell"/>
</dbReference>
<dbReference type="GO" id="GO:0017022">
    <property type="term" value="F:myosin binding"/>
    <property type="evidence" value="ECO:0007669"/>
    <property type="project" value="InterPro"/>
</dbReference>
<dbReference type="GO" id="GO:0045033">
    <property type="term" value="P:peroxisome inheritance"/>
    <property type="evidence" value="ECO:0007669"/>
    <property type="project" value="InterPro"/>
</dbReference>
<dbReference type="InterPro" id="IPR026235">
    <property type="entry name" value="INP2"/>
</dbReference>
<dbReference type="InterPro" id="IPR026859">
    <property type="entry name" value="Myosin-bd"/>
</dbReference>
<dbReference type="Pfam" id="PF12632">
    <property type="entry name" value="Vezatin"/>
    <property type="match status" value="1"/>
</dbReference>
<dbReference type="PRINTS" id="PR02104">
    <property type="entry name" value="INPROXISOME2"/>
</dbReference>
<comment type="function">
    <text evidence="1">Required for peroxisome inheritance.</text>
</comment>
<comment type="subcellular location">
    <subcellularLocation>
        <location evidence="1">Peroxisome membrane</location>
        <topology evidence="1">Single-pass membrane protein</topology>
    </subcellularLocation>
</comment>
<comment type="similarity">
    <text evidence="4">Belongs to the INP2 family.</text>
</comment>
<reference key="1">
    <citation type="journal article" date="2004" name="Nature">
        <title>Genome evolution in yeasts.</title>
        <authorList>
            <person name="Dujon B."/>
            <person name="Sherman D."/>
            <person name="Fischer G."/>
            <person name="Durrens P."/>
            <person name="Casaregola S."/>
            <person name="Lafontaine I."/>
            <person name="de Montigny J."/>
            <person name="Marck C."/>
            <person name="Neuveglise C."/>
            <person name="Talla E."/>
            <person name="Goffard N."/>
            <person name="Frangeul L."/>
            <person name="Aigle M."/>
            <person name="Anthouard V."/>
            <person name="Babour A."/>
            <person name="Barbe V."/>
            <person name="Barnay S."/>
            <person name="Blanchin S."/>
            <person name="Beckerich J.-M."/>
            <person name="Beyne E."/>
            <person name="Bleykasten C."/>
            <person name="Boisrame A."/>
            <person name="Boyer J."/>
            <person name="Cattolico L."/>
            <person name="Confanioleri F."/>
            <person name="de Daruvar A."/>
            <person name="Despons L."/>
            <person name="Fabre E."/>
            <person name="Fairhead C."/>
            <person name="Ferry-Dumazet H."/>
            <person name="Groppi A."/>
            <person name="Hantraye F."/>
            <person name="Hennequin C."/>
            <person name="Jauniaux N."/>
            <person name="Joyet P."/>
            <person name="Kachouri R."/>
            <person name="Kerrest A."/>
            <person name="Koszul R."/>
            <person name="Lemaire M."/>
            <person name="Lesur I."/>
            <person name="Ma L."/>
            <person name="Muller H."/>
            <person name="Nicaud J.-M."/>
            <person name="Nikolski M."/>
            <person name="Oztas S."/>
            <person name="Ozier-Kalogeropoulos O."/>
            <person name="Pellenz S."/>
            <person name="Potier S."/>
            <person name="Richard G.-F."/>
            <person name="Straub M.-L."/>
            <person name="Suleau A."/>
            <person name="Swennen D."/>
            <person name="Tekaia F."/>
            <person name="Wesolowski-Louvel M."/>
            <person name="Westhof E."/>
            <person name="Wirth B."/>
            <person name="Zeniou-Meyer M."/>
            <person name="Zivanovic Y."/>
            <person name="Bolotin-Fukuhara M."/>
            <person name="Thierry A."/>
            <person name="Bouchier C."/>
            <person name="Caudron B."/>
            <person name="Scarpelli C."/>
            <person name="Gaillardin C."/>
            <person name="Weissenbach J."/>
            <person name="Wincker P."/>
            <person name="Souciet J.-L."/>
        </authorList>
    </citation>
    <scope>NUCLEOTIDE SEQUENCE [LARGE SCALE GENOMIC DNA]</scope>
    <source>
        <strain>ATCC 8585 / CBS 2359 / DSM 70799 / NBRC 1267 / NRRL Y-1140 / WM37</strain>
    </source>
</reference>
<gene>
    <name type="primary">INP2</name>
    <name type="ordered locus">KLLA0E01694g</name>
</gene>
<name>INP2_KLULA</name>
<feature type="chain" id="PRO_0000308734" description="Inheritance of peroxisomes protein 2">
    <location>
        <begin position="1"/>
        <end position="666"/>
    </location>
</feature>
<feature type="transmembrane region" description="Helical" evidence="2">
    <location>
        <begin position="214"/>
        <end position="230"/>
    </location>
</feature>
<feature type="region of interest" description="Disordered" evidence="3">
    <location>
        <begin position="562"/>
        <end position="586"/>
    </location>
</feature>
<feature type="glycosylation site" description="N-linked (GlcNAc...) asparagine" evidence="2">
    <location>
        <position position="374"/>
    </location>
</feature>
<feature type="glycosylation site" description="N-linked (GlcNAc...) asparagine" evidence="2">
    <location>
        <position position="582"/>
    </location>
</feature>
<feature type="glycosylation site" description="N-linked (GlcNAc...) asparagine" evidence="2">
    <location>
        <position position="604"/>
    </location>
</feature>
<keyword id="KW-0325">Glycoprotein</keyword>
<keyword id="KW-0472">Membrane</keyword>
<keyword id="KW-0576">Peroxisome</keyword>
<keyword id="KW-0675">Receptor</keyword>
<keyword id="KW-1185">Reference proteome</keyword>
<keyword id="KW-0812">Transmembrane</keyword>
<keyword id="KW-1133">Transmembrane helix</keyword>
<accession>Q6CPW5</accession>
<evidence type="ECO:0000250" key="1"/>
<evidence type="ECO:0000255" key="2"/>
<evidence type="ECO:0000256" key="3">
    <source>
        <dbReference type="SAM" id="MobiDB-lite"/>
    </source>
</evidence>
<evidence type="ECO:0000305" key="4"/>
<protein>
    <recommendedName>
        <fullName>Inheritance of peroxisomes protein 2</fullName>
    </recommendedName>
</protein>
<organism>
    <name type="scientific">Kluyveromyces lactis (strain ATCC 8585 / CBS 2359 / DSM 70799 / NBRC 1267 / NRRL Y-1140 / WM37)</name>
    <name type="common">Yeast</name>
    <name type="synonym">Candida sphaerica</name>
    <dbReference type="NCBI Taxonomy" id="284590"/>
    <lineage>
        <taxon>Eukaryota</taxon>
        <taxon>Fungi</taxon>
        <taxon>Dikarya</taxon>
        <taxon>Ascomycota</taxon>
        <taxon>Saccharomycotina</taxon>
        <taxon>Saccharomycetes</taxon>
        <taxon>Saccharomycetales</taxon>
        <taxon>Saccharomycetaceae</taxon>
        <taxon>Kluyveromyces</taxon>
    </lineage>
</organism>
<sequence>MDIFQAVPLHLQIPRIEIPKMASAASTPSTMSSSQTWSSSRPQVPISYQQLRKLSEWGIEALKDTSPTVVGQDRFESQEILIDNDYRTDFLNSHEEDSRWSKQVDLIMKQLPYGDLDAFVDEFHYEIISSQLLTSSIASHHQLFTVQKSILNFNKENTLSIHNAEGKTIPTKYGQLLISGKKFYLQRTIPYMFTILTARKAFRKMLYKRHLPRSSLMSLLMIAVYLALQQEYFHAKYSKYTALLNLRQMNAALQSVDKLIYRYHLTYKELTIYKPIALTENRGLRSDEARTLTLLTDVLTCTVDQLFHKLNIASSNILPVVNAVQLTDYISIYNVDLQSLYQMIRTVESLDITQKLERLQYMRKFFLCCLLSINYTDPLKKCEIALVLKRIFPGYHVEKTSDIERFQIISKQLYTLTQGISSLLPVLHHYKHLLLSVYGSTIEKEDPESKEAVITQSIYRLSELQRYLMKQDKTSTELSSHLIDELNGIIQIWNIDYKHNSHEQLKPPKCSPRPSSQRVFSGGLNLDIVKTTSDIPVVVDSFPKLTSLVDVLEVDETGSDIEKEHEELVYGTENDQETASSNDSKFSRFTDDQLRHELNQRILNLSIENKKSRENLRKQKSFELMNRKIENQKKGRPQIDCKGLFNSEESIPVLFELKQFLNRRSD</sequence>